<comment type="function">
    <text evidence="1">Component of the NuA4 histone acetyltransferase complex which is involved in transcriptional activation of select genes principally by acetylation of nucleosomal histone H4 and H2A. This modification may both alter nucleosome - DNA interactions and promote interaction of the modified histones with other proteins which positively regulate transcription. This complex may be required for the activation of transcriptional programs associated with oncogene and proto-oncogene mediated growth induction, tumor suppressor mediated growth arrest and replicative senescence, apoptosis, and DNA repair. The NuA4 complex ATPase and helicase activities seem to be, at least in part, contributed by the association of RUVBL1 and RUVBL2 with EP400. NuA4 may also play a direct role in DNA repair when directly recruited to sites of DNA damage. Also a component of the MSIN3A complex which acts to repress transcription by deacetylation of nucleosomal histones (By similarity).</text>
</comment>
<comment type="subunit">
    <text evidence="1">Component of the NuA4 histone acetyltransferase complex which contains the catalytic subunit KAT5/TIP60 and the subunits EP400, TRRAP/PAF400, BRD8/SMAP, EPC1, DMAP1/DNMAP1, RUVBL1/TIP49, RUVBL2, ING3, actin, ACTL6A/BAF53A, MORF4L1/MRG15, MORF4L2/MRGX, MRGBP, YEATS4/GAS41 and VPS72/YL1. The NuA4 complex interacts with MYC and the adenovirus E1A protein. MORF4L1 may also participate in the formation of NuA4 related complexes which lack the KAT5/TIP60 catalytic subunit, but which include the SWI/SNF related protein SRCAP. Component of the MSIN3A histone deacetylase complex, which includes SIN3A, HDAC2, ARID4B, MORF4L1, RBBP4/RbAp48, and RBBP7/RbAp46. Interacts with MRFAP1 and RB1. May also interact with one or more as yet undefined members of the TLE (transducin-like enhancer of split) family of transcriptional repressors (By similarity).</text>
</comment>
<comment type="subcellular location">
    <subcellularLocation>
        <location evidence="3">Nucleus</location>
    </subcellularLocation>
</comment>
<dbReference type="EMBL" id="AB025049">
    <property type="protein sequence ID" value="BAA84687.1"/>
    <property type="molecule type" value="mRNA"/>
</dbReference>
<dbReference type="EMBL" id="AK075946">
    <property type="protein sequence ID" value="BAC36075.1"/>
    <property type="molecule type" value="mRNA"/>
</dbReference>
<dbReference type="EMBL" id="AK088849">
    <property type="protein sequence ID" value="BAC40611.1"/>
    <property type="molecule type" value="mRNA"/>
</dbReference>
<dbReference type="EMBL" id="AK089963">
    <property type="protein sequence ID" value="BAC41017.1"/>
    <property type="molecule type" value="mRNA"/>
</dbReference>
<dbReference type="EMBL" id="AK129038">
    <property type="protein sequence ID" value="BAC97848.1"/>
    <property type="molecule type" value="mRNA"/>
</dbReference>
<dbReference type="EMBL" id="AK131944">
    <property type="protein sequence ID" value="BAE20890.1"/>
    <property type="molecule type" value="mRNA"/>
</dbReference>
<dbReference type="EMBL" id="AK145686">
    <property type="protein sequence ID" value="BAE26588.1"/>
    <property type="molecule type" value="mRNA"/>
</dbReference>
<dbReference type="EMBL" id="AK150401">
    <property type="protein sequence ID" value="BAE29527.1"/>
    <property type="molecule type" value="mRNA"/>
</dbReference>
<dbReference type="EMBL" id="AK150670">
    <property type="protein sequence ID" value="BAE29752.1"/>
    <property type="molecule type" value="mRNA"/>
</dbReference>
<dbReference type="EMBL" id="AK151570">
    <property type="protein sequence ID" value="BAE30512.1"/>
    <property type="molecule type" value="mRNA"/>
</dbReference>
<dbReference type="EMBL" id="AK160012">
    <property type="protein sequence ID" value="BAE35559.1"/>
    <property type="molecule type" value="mRNA"/>
</dbReference>
<dbReference type="EMBL" id="AK161610">
    <property type="protein sequence ID" value="BAE36491.1"/>
    <property type="molecule type" value="mRNA"/>
</dbReference>
<dbReference type="EMBL" id="AK164433">
    <property type="protein sequence ID" value="BAE37786.1"/>
    <property type="molecule type" value="mRNA"/>
</dbReference>
<dbReference type="EMBL" id="AK166637">
    <property type="protein sequence ID" value="BAE38909.1"/>
    <property type="molecule type" value="mRNA"/>
</dbReference>
<dbReference type="EMBL" id="AL671887">
    <property type="status" value="NOT_ANNOTATED_CDS"/>
    <property type="molecule type" value="Genomic_DNA"/>
</dbReference>
<dbReference type="EMBL" id="BC075653">
    <property type="protein sequence ID" value="AAH75653.1"/>
    <property type="molecule type" value="mRNA"/>
</dbReference>
<dbReference type="EMBL" id="BC088731">
    <property type="protein sequence ID" value="AAH88731.1"/>
    <property type="molecule type" value="mRNA"/>
</dbReference>
<dbReference type="CCDS" id="CCDS30422.1"/>
<dbReference type="RefSeq" id="NP_001161697.1">
    <property type="nucleotide sequence ID" value="NM_001168225.1"/>
</dbReference>
<dbReference type="RefSeq" id="NP_001161698.1">
    <property type="nucleotide sequence ID" value="NM_001168226.1"/>
</dbReference>
<dbReference type="RefSeq" id="NP_001161699.1">
    <property type="nucleotide sequence ID" value="NM_001168227.1"/>
</dbReference>
<dbReference type="RefSeq" id="NP_001161700.1">
    <property type="nucleotide sequence ID" value="NM_001168228.1"/>
</dbReference>
<dbReference type="RefSeq" id="NP_001161701.1">
    <property type="nucleotide sequence ID" value="NM_001168229.1"/>
</dbReference>
<dbReference type="RefSeq" id="NP_001161702.1">
    <property type="nucleotide sequence ID" value="NM_001168230.1"/>
</dbReference>
<dbReference type="RefSeq" id="NP_062742.4">
    <property type="nucleotide sequence ID" value="NM_019768.4"/>
</dbReference>
<dbReference type="RefSeq" id="XP_006528647.1">
    <property type="nucleotide sequence ID" value="XM_006528584.3"/>
</dbReference>
<dbReference type="SMR" id="Q9R0Q4"/>
<dbReference type="BioGRID" id="207951">
    <property type="interactions" value="4"/>
</dbReference>
<dbReference type="ComplexPortal" id="CPX-990">
    <property type="entry name" value="NuA4 histone acetyltransferase complex"/>
</dbReference>
<dbReference type="FunCoup" id="Q9R0Q4">
    <property type="interactions" value="2076"/>
</dbReference>
<dbReference type="IntAct" id="Q9R0Q4">
    <property type="interactions" value="1"/>
</dbReference>
<dbReference type="STRING" id="10090.ENSMUSP00000033797"/>
<dbReference type="iPTMnet" id="Q9R0Q4"/>
<dbReference type="PhosphoSitePlus" id="Q9R0Q4"/>
<dbReference type="PaxDb" id="10090-ENSMUSP00000033797"/>
<dbReference type="PeptideAtlas" id="Q9R0Q4"/>
<dbReference type="ProteomicsDB" id="290269"/>
<dbReference type="Pumba" id="Q9R0Q4"/>
<dbReference type="Antibodypedia" id="14953">
    <property type="antibodies" value="161 antibodies from 30 providers"/>
</dbReference>
<dbReference type="DNASU" id="56397"/>
<dbReference type="Ensembl" id="ENSMUST00000033797.13">
    <property type="protein sequence ID" value="ENSMUSP00000033797.7"/>
    <property type="gene ID" value="ENSMUSG00000031422.17"/>
</dbReference>
<dbReference type="Ensembl" id="ENSMUST00000080411.13">
    <property type="protein sequence ID" value="ENSMUSP00000108722.4"/>
    <property type="gene ID" value="ENSMUSG00000031422.17"/>
</dbReference>
<dbReference type="Ensembl" id="ENSMUST00000113097.8">
    <property type="protein sequence ID" value="ENSMUSP00000108720.2"/>
    <property type="gene ID" value="ENSMUSG00000031422.17"/>
</dbReference>
<dbReference type="Ensembl" id="ENSMUST00000164609.8">
    <property type="protein sequence ID" value="ENSMUSP00000129774.2"/>
    <property type="gene ID" value="ENSMUSG00000031422.17"/>
</dbReference>
<dbReference type="Ensembl" id="ENSMUST00000166478.8">
    <property type="protein sequence ID" value="ENSMUSP00000131909.2"/>
    <property type="gene ID" value="ENSMUSG00000031422.17"/>
</dbReference>
<dbReference type="Ensembl" id="ENSMUST00000166930.8">
    <property type="protein sequence ID" value="ENSMUSP00000126363.2"/>
    <property type="gene ID" value="ENSMUSG00000031422.17"/>
</dbReference>
<dbReference type="Ensembl" id="ENSMUST00000169418.8">
    <property type="protein sequence ID" value="ENSMUSP00000132643.2"/>
    <property type="gene ID" value="ENSMUSG00000031422.17"/>
</dbReference>
<dbReference type="GeneID" id="56397"/>
<dbReference type="KEGG" id="mmu:56397"/>
<dbReference type="UCSC" id="uc009uiu.3">
    <property type="organism name" value="mouse"/>
</dbReference>
<dbReference type="AGR" id="MGI:1927167"/>
<dbReference type="CTD" id="9643"/>
<dbReference type="MGI" id="MGI:1927167">
    <property type="gene designation" value="Morf4l2"/>
</dbReference>
<dbReference type="VEuPathDB" id="HostDB:ENSMUSG00000031422"/>
<dbReference type="eggNOG" id="KOG3001">
    <property type="taxonomic scope" value="Eukaryota"/>
</dbReference>
<dbReference type="GeneTree" id="ENSGT00950000182965"/>
<dbReference type="HOGENOM" id="CLU_039566_4_0_1"/>
<dbReference type="InParanoid" id="Q9R0Q4"/>
<dbReference type="OMA" id="PTRGNMQ"/>
<dbReference type="OrthoDB" id="124855at2759"/>
<dbReference type="PhylomeDB" id="Q9R0Q4"/>
<dbReference type="TreeFam" id="TF323400"/>
<dbReference type="BioGRID-ORCS" id="56397">
    <property type="hits" value="10 hits in 115 CRISPR screens"/>
</dbReference>
<dbReference type="ChiTaRS" id="Morf4l2">
    <property type="organism name" value="mouse"/>
</dbReference>
<dbReference type="PRO" id="PR:Q9R0Q4"/>
<dbReference type="Proteomes" id="UP000000589">
    <property type="component" value="Chromosome X"/>
</dbReference>
<dbReference type="RNAct" id="Q9R0Q4">
    <property type="molecule type" value="protein"/>
</dbReference>
<dbReference type="Bgee" id="ENSMUSG00000031422">
    <property type="expression patterns" value="Expressed in yolk sac and 77 other cell types or tissues"/>
</dbReference>
<dbReference type="ExpressionAtlas" id="Q9R0Q4">
    <property type="expression patterns" value="baseline and differential"/>
</dbReference>
<dbReference type="GO" id="GO:0035267">
    <property type="term" value="C:NuA4 histone acetyltransferase complex"/>
    <property type="evidence" value="ECO:0000266"/>
    <property type="project" value="ComplexPortal"/>
</dbReference>
<dbReference type="GO" id="GO:0005730">
    <property type="term" value="C:nucleolus"/>
    <property type="evidence" value="ECO:0007669"/>
    <property type="project" value="Ensembl"/>
</dbReference>
<dbReference type="GO" id="GO:0005654">
    <property type="term" value="C:nucleoplasm"/>
    <property type="evidence" value="ECO:0007669"/>
    <property type="project" value="Ensembl"/>
</dbReference>
<dbReference type="GO" id="GO:0000786">
    <property type="term" value="C:nucleosome"/>
    <property type="evidence" value="ECO:0000266"/>
    <property type="project" value="ComplexPortal"/>
</dbReference>
<dbReference type="GO" id="GO:0005886">
    <property type="term" value="C:plasma membrane"/>
    <property type="evidence" value="ECO:0007669"/>
    <property type="project" value="Ensembl"/>
</dbReference>
<dbReference type="GO" id="GO:0006325">
    <property type="term" value="P:chromatin organization"/>
    <property type="evidence" value="ECO:0007669"/>
    <property type="project" value="UniProtKB-KW"/>
</dbReference>
<dbReference type="GO" id="GO:0006281">
    <property type="term" value="P:DNA repair"/>
    <property type="evidence" value="ECO:0007669"/>
    <property type="project" value="UniProtKB-KW"/>
</dbReference>
<dbReference type="GO" id="GO:0045893">
    <property type="term" value="P:positive regulation of DNA-templated transcription"/>
    <property type="evidence" value="ECO:0000303"/>
    <property type="project" value="ComplexPortal"/>
</dbReference>
<dbReference type="GO" id="GO:1905168">
    <property type="term" value="P:positive regulation of double-strand break repair via homologous recombination"/>
    <property type="evidence" value="ECO:0000266"/>
    <property type="project" value="ComplexPortal"/>
</dbReference>
<dbReference type="GO" id="GO:0042981">
    <property type="term" value="P:regulation of apoptotic process"/>
    <property type="evidence" value="ECO:0000303"/>
    <property type="project" value="ComplexPortal"/>
</dbReference>
<dbReference type="GO" id="GO:0051726">
    <property type="term" value="P:regulation of cell cycle"/>
    <property type="evidence" value="ECO:0000266"/>
    <property type="project" value="ComplexPortal"/>
</dbReference>
<dbReference type="GO" id="GO:2000779">
    <property type="term" value="P:regulation of double-strand break repair"/>
    <property type="evidence" value="ECO:0000303"/>
    <property type="project" value="ComplexPortal"/>
</dbReference>
<dbReference type="FunFam" id="1.10.274.30:FF:000001">
    <property type="entry name" value="Mortality factor 4-like protein 1"/>
    <property type="match status" value="1"/>
</dbReference>
<dbReference type="Gene3D" id="1.10.274.30">
    <property type="entry name" value="MRG domain"/>
    <property type="match status" value="1"/>
</dbReference>
<dbReference type="InterPro" id="IPR008676">
    <property type="entry name" value="MRG"/>
</dbReference>
<dbReference type="InterPro" id="IPR038217">
    <property type="entry name" value="MRG_C_sf"/>
</dbReference>
<dbReference type="InterPro" id="IPR026541">
    <property type="entry name" value="MRG_dom"/>
</dbReference>
<dbReference type="PANTHER" id="PTHR10880">
    <property type="entry name" value="MORTALITY FACTOR 4-LIKE PROTEIN"/>
    <property type="match status" value="1"/>
</dbReference>
<dbReference type="PANTHER" id="PTHR10880:SF25">
    <property type="entry name" value="MORTALITY FACTOR 4-LIKE PROTEIN 2"/>
    <property type="match status" value="1"/>
</dbReference>
<dbReference type="Pfam" id="PF05712">
    <property type="entry name" value="MRG"/>
    <property type="match status" value="1"/>
</dbReference>
<dbReference type="PROSITE" id="PS51640">
    <property type="entry name" value="MRG"/>
    <property type="match status" value="1"/>
</dbReference>
<gene>
    <name type="primary">Morf4l2</name>
    <name type="synonym">Kiaa0026</name>
    <name type="synonym">Sid393</name>
</gene>
<proteinExistence type="evidence at protein level"/>
<organism>
    <name type="scientific">Mus musculus</name>
    <name type="common">Mouse</name>
    <dbReference type="NCBI Taxonomy" id="10090"/>
    <lineage>
        <taxon>Eukaryota</taxon>
        <taxon>Metazoa</taxon>
        <taxon>Chordata</taxon>
        <taxon>Craniata</taxon>
        <taxon>Vertebrata</taxon>
        <taxon>Euteleostomi</taxon>
        <taxon>Mammalia</taxon>
        <taxon>Eutheria</taxon>
        <taxon>Euarchontoglires</taxon>
        <taxon>Glires</taxon>
        <taxon>Rodentia</taxon>
        <taxon>Myomorpha</taxon>
        <taxon>Muroidea</taxon>
        <taxon>Muridae</taxon>
        <taxon>Murinae</taxon>
        <taxon>Mus</taxon>
        <taxon>Mus</taxon>
    </lineage>
</organism>
<keyword id="KW-0156">Chromatin regulator</keyword>
<keyword id="KW-0227">DNA damage</keyword>
<keyword id="KW-0234">DNA repair</keyword>
<keyword id="KW-0341">Growth regulation</keyword>
<keyword id="KW-0539">Nucleus</keyword>
<keyword id="KW-0597">Phosphoprotein</keyword>
<keyword id="KW-1185">Reference proteome</keyword>
<keyword id="KW-0804">Transcription</keyword>
<keyword id="KW-0805">Transcription regulation</keyword>
<evidence type="ECO:0000250" key="1"/>
<evidence type="ECO:0000250" key="2">
    <source>
        <dbReference type="UniProtKB" id="Q15014"/>
    </source>
</evidence>
<evidence type="ECO:0000255" key="3">
    <source>
        <dbReference type="PROSITE-ProRule" id="PRU00972"/>
    </source>
</evidence>
<evidence type="ECO:0000256" key="4">
    <source>
        <dbReference type="SAM" id="MobiDB-lite"/>
    </source>
</evidence>
<evidence type="ECO:0000305" key="5"/>
<sequence length="288" mass="32184">MSSRKQASQTRGQQSAEEDNFKKPTRSNMQRSKMRGAASGKKSAGSQPKNLDPALPGRWGGRSAENPPSGSVRKTRKNKQKAPGNGDGGSTSEVPQPPRKKRARADPTVESEEAFKSRMEVKVKIPEELKPWLVEDWDLVTRQKQLFQLPAKKNVDAILEEYANCKKSQGNVDNKEYAVNEVVGGIKEYFNVMLGTQLLYKFERPQYAEILLAHPDAPMSQIYGAPHLLRLFVRIGAMLAYTPLDEKSLALLLGYLHDFLKYLAKNSASLFTASDYKVASADYHRKAL</sequence>
<accession>Q9R0Q4</accession>
<accession>A2AEB2</accession>
<accession>Q3UL62</accession>
<accession>Q6DIB1</accession>
<accession>Q6ZQK7</accession>
<accession>Q8C201</accession>
<accession>Q8C6C2</accession>
<reference key="1">
    <citation type="submission" date="1999-03" db="EMBL/GenBank/DDBJ databases">
        <title>Mouse homolog of KIAA0026.</title>
        <authorList>
            <person name="Seki N."/>
            <person name="Hattori A."/>
            <person name="Hayashi A."/>
            <person name="Kozuma S."/>
            <person name="Muramatsu M."/>
            <person name="Saito T."/>
        </authorList>
    </citation>
    <scope>NUCLEOTIDE SEQUENCE [MRNA]</scope>
</reference>
<reference key="2">
    <citation type="journal article" date="2005" name="Science">
        <title>The transcriptional landscape of the mammalian genome.</title>
        <authorList>
            <person name="Carninci P."/>
            <person name="Kasukawa T."/>
            <person name="Katayama S."/>
            <person name="Gough J."/>
            <person name="Frith M.C."/>
            <person name="Maeda N."/>
            <person name="Oyama R."/>
            <person name="Ravasi T."/>
            <person name="Lenhard B."/>
            <person name="Wells C."/>
            <person name="Kodzius R."/>
            <person name="Shimokawa K."/>
            <person name="Bajic V.B."/>
            <person name="Brenner S.E."/>
            <person name="Batalov S."/>
            <person name="Forrest A.R."/>
            <person name="Zavolan M."/>
            <person name="Davis M.J."/>
            <person name="Wilming L.G."/>
            <person name="Aidinis V."/>
            <person name="Allen J.E."/>
            <person name="Ambesi-Impiombato A."/>
            <person name="Apweiler R."/>
            <person name="Aturaliya R.N."/>
            <person name="Bailey T.L."/>
            <person name="Bansal M."/>
            <person name="Baxter L."/>
            <person name="Beisel K.W."/>
            <person name="Bersano T."/>
            <person name="Bono H."/>
            <person name="Chalk A.M."/>
            <person name="Chiu K.P."/>
            <person name="Choudhary V."/>
            <person name="Christoffels A."/>
            <person name="Clutterbuck D.R."/>
            <person name="Crowe M.L."/>
            <person name="Dalla E."/>
            <person name="Dalrymple B.P."/>
            <person name="de Bono B."/>
            <person name="Della Gatta G."/>
            <person name="di Bernardo D."/>
            <person name="Down T."/>
            <person name="Engstrom P."/>
            <person name="Fagiolini M."/>
            <person name="Faulkner G."/>
            <person name="Fletcher C.F."/>
            <person name="Fukushima T."/>
            <person name="Furuno M."/>
            <person name="Futaki S."/>
            <person name="Gariboldi M."/>
            <person name="Georgii-Hemming P."/>
            <person name="Gingeras T.R."/>
            <person name="Gojobori T."/>
            <person name="Green R.E."/>
            <person name="Gustincich S."/>
            <person name="Harbers M."/>
            <person name="Hayashi Y."/>
            <person name="Hensch T.K."/>
            <person name="Hirokawa N."/>
            <person name="Hill D."/>
            <person name="Huminiecki L."/>
            <person name="Iacono M."/>
            <person name="Ikeo K."/>
            <person name="Iwama A."/>
            <person name="Ishikawa T."/>
            <person name="Jakt M."/>
            <person name="Kanapin A."/>
            <person name="Katoh M."/>
            <person name="Kawasawa Y."/>
            <person name="Kelso J."/>
            <person name="Kitamura H."/>
            <person name="Kitano H."/>
            <person name="Kollias G."/>
            <person name="Krishnan S.P."/>
            <person name="Kruger A."/>
            <person name="Kummerfeld S.K."/>
            <person name="Kurochkin I.V."/>
            <person name="Lareau L.F."/>
            <person name="Lazarevic D."/>
            <person name="Lipovich L."/>
            <person name="Liu J."/>
            <person name="Liuni S."/>
            <person name="McWilliam S."/>
            <person name="Madan Babu M."/>
            <person name="Madera M."/>
            <person name="Marchionni L."/>
            <person name="Matsuda H."/>
            <person name="Matsuzawa S."/>
            <person name="Miki H."/>
            <person name="Mignone F."/>
            <person name="Miyake S."/>
            <person name="Morris K."/>
            <person name="Mottagui-Tabar S."/>
            <person name="Mulder N."/>
            <person name="Nakano N."/>
            <person name="Nakauchi H."/>
            <person name="Ng P."/>
            <person name="Nilsson R."/>
            <person name="Nishiguchi S."/>
            <person name="Nishikawa S."/>
            <person name="Nori F."/>
            <person name="Ohara O."/>
            <person name="Okazaki Y."/>
            <person name="Orlando V."/>
            <person name="Pang K.C."/>
            <person name="Pavan W.J."/>
            <person name="Pavesi G."/>
            <person name="Pesole G."/>
            <person name="Petrovsky N."/>
            <person name="Piazza S."/>
            <person name="Reed J."/>
            <person name="Reid J.F."/>
            <person name="Ring B.Z."/>
            <person name="Ringwald M."/>
            <person name="Rost B."/>
            <person name="Ruan Y."/>
            <person name="Salzberg S.L."/>
            <person name="Sandelin A."/>
            <person name="Schneider C."/>
            <person name="Schoenbach C."/>
            <person name="Sekiguchi K."/>
            <person name="Semple C.A."/>
            <person name="Seno S."/>
            <person name="Sessa L."/>
            <person name="Sheng Y."/>
            <person name="Shibata Y."/>
            <person name="Shimada H."/>
            <person name="Shimada K."/>
            <person name="Silva D."/>
            <person name="Sinclair B."/>
            <person name="Sperling S."/>
            <person name="Stupka E."/>
            <person name="Sugiura K."/>
            <person name="Sultana R."/>
            <person name="Takenaka Y."/>
            <person name="Taki K."/>
            <person name="Tammoja K."/>
            <person name="Tan S.L."/>
            <person name="Tang S."/>
            <person name="Taylor M.S."/>
            <person name="Tegner J."/>
            <person name="Teichmann S.A."/>
            <person name="Ueda H.R."/>
            <person name="van Nimwegen E."/>
            <person name="Verardo R."/>
            <person name="Wei C.L."/>
            <person name="Yagi K."/>
            <person name="Yamanishi H."/>
            <person name="Zabarovsky E."/>
            <person name="Zhu S."/>
            <person name="Zimmer A."/>
            <person name="Hide W."/>
            <person name="Bult C."/>
            <person name="Grimmond S.M."/>
            <person name="Teasdale R.D."/>
            <person name="Liu E.T."/>
            <person name="Brusic V."/>
            <person name="Quackenbush J."/>
            <person name="Wahlestedt C."/>
            <person name="Mattick J.S."/>
            <person name="Hume D.A."/>
            <person name="Kai C."/>
            <person name="Sasaki D."/>
            <person name="Tomaru Y."/>
            <person name="Fukuda S."/>
            <person name="Kanamori-Katayama M."/>
            <person name="Suzuki M."/>
            <person name="Aoki J."/>
            <person name="Arakawa T."/>
            <person name="Iida J."/>
            <person name="Imamura K."/>
            <person name="Itoh M."/>
            <person name="Kato T."/>
            <person name="Kawaji H."/>
            <person name="Kawagashira N."/>
            <person name="Kawashima T."/>
            <person name="Kojima M."/>
            <person name="Kondo S."/>
            <person name="Konno H."/>
            <person name="Nakano K."/>
            <person name="Ninomiya N."/>
            <person name="Nishio T."/>
            <person name="Okada M."/>
            <person name="Plessy C."/>
            <person name="Shibata K."/>
            <person name="Shiraki T."/>
            <person name="Suzuki S."/>
            <person name="Tagami M."/>
            <person name="Waki K."/>
            <person name="Watahiki A."/>
            <person name="Okamura-Oho Y."/>
            <person name="Suzuki H."/>
            <person name="Kawai J."/>
            <person name="Hayashizaki Y."/>
        </authorList>
    </citation>
    <scope>NUCLEOTIDE SEQUENCE [LARGE SCALE MRNA]</scope>
    <source>
        <strain>C3H/HeJ</strain>
        <strain>C57BL/6J</strain>
        <strain>NOD</strain>
        <tissue>Bone marrow</tissue>
        <tissue>Embryonic stem cell</tissue>
        <tissue>Eye</tissue>
        <tissue>Thymus</tissue>
    </source>
</reference>
<reference key="3">
    <citation type="journal article" date="2003" name="DNA Res.">
        <title>Prediction of the coding sequences of mouse homologues of KIAA gene: III. The complete nucleotide sequences of 500 mouse KIAA-homologous cDNAs identified by screening of terminal sequences of cDNA clones randomly sampled from size-fractionated libraries.</title>
        <authorList>
            <person name="Okazaki N."/>
            <person name="Kikuno R."/>
            <person name="Ohara R."/>
            <person name="Inamoto S."/>
            <person name="Koseki H."/>
            <person name="Hiraoka S."/>
            <person name="Saga Y."/>
            <person name="Nagase T."/>
            <person name="Ohara O."/>
            <person name="Koga H."/>
        </authorList>
    </citation>
    <scope>NUCLEOTIDE SEQUENCE [LARGE SCALE MRNA]</scope>
    <source>
        <tissue>Brain</tissue>
    </source>
</reference>
<reference key="4">
    <citation type="journal article" date="2009" name="PLoS Biol.">
        <title>Lineage-specific biology revealed by a finished genome assembly of the mouse.</title>
        <authorList>
            <person name="Church D.M."/>
            <person name="Goodstadt L."/>
            <person name="Hillier L.W."/>
            <person name="Zody M.C."/>
            <person name="Goldstein S."/>
            <person name="She X."/>
            <person name="Bult C.J."/>
            <person name="Agarwala R."/>
            <person name="Cherry J.L."/>
            <person name="DiCuccio M."/>
            <person name="Hlavina W."/>
            <person name="Kapustin Y."/>
            <person name="Meric P."/>
            <person name="Maglott D."/>
            <person name="Birtle Z."/>
            <person name="Marques A.C."/>
            <person name="Graves T."/>
            <person name="Zhou S."/>
            <person name="Teague B."/>
            <person name="Potamousis K."/>
            <person name="Churas C."/>
            <person name="Place M."/>
            <person name="Herschleb J."/>
            <person name="Runnheim R."/>
            <person name="Forrest D."/>
            <person name="Amos-Landgraf J."/>
            <person name="Schwartz D.C."/>
            <person name="Cheng Z."/>
            <person name="Lindblad-Toh K."/>
            <person name="Eichler E.E."/>
            <person name="Ponting C.P."/>
        </authorList>
    </citation>
    <scope>NUCLEOTIDE SEQUENCE [LARGE SCALE GENOMIC DNA]</scope>
    <source>
        <strain>C57BL/6J</strain>
    </source>
</reference>
<reference key="5">
    <citation type="journal article" date="2004" name="Genome Res.">
        <title>The status, quality, and expansion of the NIH full-length cDNA project: the Mammalian Gene Collection (MGC).</title>
        <authorList>
            <consortium name="The MGC Project Team"/>
        </authorList>
    </citation>
    <scope>NUCLEOTIDE SEQUENCE [LARGE SCALE MRNA]</scope>
    <source>
        <strain>129</strain>
        <strain>C57BL/6J</strain>
        <tissue>Eye</tissue>
        <tissue>Mammary tumor</tissue>
    </source>
</reference>
<reference key="6">
    <citation type="journal article" date="2010" name="Cell">
        <title>A tissue-specific atlas of mouse protein phosphorylation and expression.</title>
        <authorList>
            <person name="Huttlin E.L."/>
            <person name="Jedrychowski M.P."/>
            <person name="Elias J.E."/>
            <person name="Goswami T."/>
            <person name="Rad R."/>
            <person name="Beausoleil S.A."/>
            <person name="Villen J."/>
            <person name="Haas W."/>
            <person name="Sowa M.E."/>
            <person name="Gygi S.P."/>
        </authorList>
    </citation>
    <scope>IDENTIFICATION BY MASS SPECTROMETRY [LARGE SCALE ANALYSIS]</scope>
    <source>
        <tissue>Kidney</tissue>
        <tissue>Pancreas</tissue>
        <tissue>Spleen</tissue>
    </source>
</reference>
<feature type="chain" id="PRO_0000088769" description="Mortality factor 4-like protein 2">
    <location>
        <begin position="1"/>
        <end position="288"/>
    </location>
</feature>
<feature type="domain" description="MRG" evidence="3">
    <location>
        <begin position="117"/>
        <end position="288"/>
    </location>
</feature>
<feature type="region of interest" description="Disordered" evidence="4">
    <location>
        <begin position="1"/>
        <end position="115"/>
    </location>
</feature>
<feature type="compositionally biased region" description="Polar residues" evidence="4">
    <location>
        <begin position="1"/>
        <end position="15"/>
    </location>
</feature>
<feature type="modified residue" description="Phosphoserine" evidence="2">
    <location>
        <position position="71"/>
    </location>
</feature>
<feature type="sequence conflict" description="In Ref. 5; AAH75653." evidence="5" ref="5">
    <original>A</original>
    <variation>S</variation>
    <location>
        <position position="37"/>
    </location>
</feature>
<feature type="sequence conflict" description="In Ref. 2; BAC36075." evidence="5" ref="2">
    <original>Q</original>
    <variation>P</variation>
    <location>
        <position position="145"/>
    </location>
</feature>
<feature type="sequence conflict" description="In Ref. 3; BAC97848." evidence="5" ref="3">
    <original>E</original>
    <variation>D</variation>
    <location>
        <position position="176"/>
    </location>
</feature>
<feature type="sequence conflict" description="In Ref. 2; BAC41017." evidence="5" ref="2">
    <original>I</original>
    <variation>T</variation>
    <location>
        <position position="186"/>
    </location>
</feature>
<protein>
    <recommendedName>
        <fullName>Mortality factor 4-like protein 2</fullName>
    </recommendedName>
    <alternativeName>
        <fullName>MORF-related gene X protein</fullName>
    </alternativeName>
    <alternativeName>
        <fullName>Sid 393</fullName>
    </alternativeName>
    <alternativeName>
        <fullName>Transcription factor-like protein MRGX</fullName>
    </alternativeName>
</protein>
<name>MO4L2_MOUSE</name>